<proteinExistence type="inferred from homology"/>
<evidence type="ECO:0000255" key="1">
    <source>
        <dbReference type="HAMAP-Rule" id="MF_00023"/>
    </source>
</evidence>
<dbReference type="EMBL" id="CP000025">
    <property type="protein sequence ID" value="AAW35570.1"/>
    <property type="molecule type" value="Genomic_DNA"/>
</dbReference>
<dbReference type="RefSeq" id="WP_002860207.1">
    <property type="nucleotide sequence ID" value="NC_003912.7"/>
</dbReference>
<dbReference type="SMR" id="Q5HTZ9"/>
<dbReference type="KEGG" id="cjr:CJE1248"/>
<dbReference type="HOGENOM" id="CLU_108953_3_1_7"/>
<dbReference type="GO" id="GO:0005829">
    <property type="term" value="C:cytosol"/>
    <property type="evidence" value="ECO:0007669"/>
    <property type="project" value="TreeGrafter"/>
</dbReference>
<dbReference type="GO" id="GO:0003723">
    <property type="term" value="F:RNA binding"/>
    <property type="evidence" value="ECO:0007669"/>
    <property type="project" value="UniProtKB-UniRule"/>
</dbReference>
<dbReference type="GO" id="GO:0070929">
    <property type="term" value="P:trans-translation"/>
    <property type="evidence" value="ECO:0007669"/>
    <property type="project" value="UniProtKB-UniRule"/>
</dbReference>
<dbReference type="CDD" id="cd09294">
    <property type="entry name" value="SmpB"/>
    <property type="match status" value="1"/>
</dbReference>
<dbReference type="Gene3D" id="2.40.280.10">
    <property type="match status" value="1"/>
</dbReference>
<dbReference type="HAMAP" id="MF_00023">
    <property type="entry name" value="SmpB"/>
    <property type="match status" value="1"/>
</dbReference>
<dbReference type="InterPro" id="IPR023620">
    <property type="entry name" value="SmpB"/>
</dbReference>
<dbReference type="InterPro" id="IPR000037">
    <property type="entry name" value="SsrA-bd_prot"/>
</dbReference>
<dbReference type="NCBIfam" id="NF003843">
    <property type="entry name" value="PRK05422.1"/>
    <property type="match status" value="1"/>
</dbReference>
<dbReference type="NCBIfam" id="TIGR00086">
    <property type="entry name" value="smpB"/>
    <property type="match status" value="1"/>
</dbReference>
<dbReference type="PANTHER" id="PTHR30308:SF2">
    <property type="entry name" value="SSRA-BINDING PROTEIN"/>
    <property type="match status" value="1"/>
</dbReference>
<dbReference type="PANTHER" id="PTHR30308">
    <property type="entry name" value="TMRNA-BINDING COMPONENT OF TRANS-TRANSLATION TAGGING COMPLEX"/>
    <property type="match status" value="1"/>
</dbReference>
<dbReference type="Pfam" id="PF01668">
    <property type="entry name" value="SmpB"/>
    <property type="match status" value="1"/>
</dbReference>
<dbReference type="SUPFAM" id="SSF74982">
    <property type="entry name" value="Small protein B (SmpB)"/>
    <property type="match status" value="1"/>
</dbReference>
<sequence>MKIIARNKKALFDYSIIERFEAGIVLKGSEVVALRAGRANLKDSFVRIIKNEIFLLNSHISLLHTTHSFYKHEERGARKLLMHRKQIDKLLGKVSIEGYTIVALDLYFNTKNKVKATLALAKGKNLHDKRETLKKKQADLEAKAAMKNYK</sequence>
<accession>Q5HTZ9</accession>
<keyword id="KW-0963">Cytoplasm</keyword>
<keyword id="KW-0694">RNA-binding</keyword>
<organism>
    <name type="scientific">Campylobacter jejuni (strain RM1221)</name>
    <dbReference type="NCBI Taxonomy" id="195099"/>
    <lineage>
        <taxon>Bacteria</taxon>
        <taxon>Pseudomonadati</taxon>
        <taxon>Campylobacterota</taxon>
        <taxon>Epsilonproteobacteria</taxon>
        <taxon>Campylobacterales</taxon>
        <taxon>Campylobacteraceae</taxon>
        <taxon>Campylobacter</taxon>
    </lineage>
</organism>
<feature type="chain" id="PRO_0000102926" description="SsrA-binding protein">
    <location>
        <begin position="1"/>
        <end position="150"/>
    </location>
</feature>
<protein>
    <recommendedName>
        <fullName evidence="1">SsrA-binding protein</fullName>
    </recommendedName>
    <alternativeName>
        <fullName evidence="1">Small protein B</fullName>
    </alternativeName>
</protein>
<gene>
    <name evidence="1" type="primary">smpB</name>
    <name type="ordered locus">CJE1248</name>
</gene>
<reference key="1">
    <citation type="journal article" date="2005" name="PLoS Biol.">
        <title>Major structural differences and novel potential virulence mechanisms from the genomes of multiple Campylobacter species.</title>
        <authorList>
            <person name="Fouts D.E."/>
            <person name="Mongodin E.F."/>
            <person name="Mandrell R.E."/>
            <person name="Miller W.G."/>
            <person name="Rasko D.A."/>
            <person name="Ravel J."/>
            <person name="Brinkac L.M."/>
            <person name="DeBoy R.T."/>
            <person name="Parker C.T."/>
            <person name="Daugherty S.C."/>
            <person name="Dodson R.J."/>
            <person name="Durkin A.S."/>
            <person name="Madupu R."/>
            <person name="Sullivan S.A."/>
            <person name="Shetty J.U."/>
            <person name="Ayodeji M.A."/>
            <person name="Shvartsbeyn A."/>
            <person name="Schatz M.C."/>
            <person name="Badger J.H."/>
            <person name="Fraser C.M."/>
            <person name="Nelson K.E."/>
        </authorList>
    </citation>
    <scope>NUCLEOTIDE SEQUENCE [LARGE SCALE GENOMIC DNA]</scope>
    <source>
        <strain>RM1221</strain>
    </source>
</reference>
<comment type="function">
    <text evidence="1">Required for rescue of stalled ribosomes mediated by trans-translation. Binds to transfer-messenger RNA (tmRNA), required for stable association of tmRNA with ribosomes. tmRNA and SmpB together mimic tRNA shape, replacing the anticodon stem-loop with SmpB. tmRNA is encoded by the ssrA gene; the 2 termini fold to resemble tRNA(Ala) and it encodes a 'tag peptide', a short internal open reading frame. During trans-translation Ala-aminoacylated tmRNA acts like a tRNA, entering the A-site of stalled ribosomes, displacing the stalled mRNA. The ribosome then switches to translate the ORF on the tmRNA; the nascent peptide is terminated with the 'tag peptide' encoded by the tmRNA and targeted for degradation. The ribosome is freed to recommence translation, which seems to be the essential function of trans-translation.</text>
</comment>
<comment type="subcellular location">
    <subcellularLocation>
        <location evidence="1">Cytoplasm</location>
    </subcellularLocation>
    <text evidence="1">The tmRNA-SmpB complex associates with stalled 70S ribosomes.</text>
</comment>
<comment type="similarity">
    <text evidence="1">Belongs to the SmpB family.</text>
</comment>
<name>SSRP_CAMJR</name>